<accession>A5VI51</accession>
<dbReference type="EC" id="5.1.1.1" evidence="1"/>
<dbReference type="EMBL" id="CP000705">
    <property type="protein sequence ID" value="ABQ82525.1"/>
    <property type="molecule type" value="Genomic_DNA"/>
</dbReference>
<dbReference type="RefSeq" id="WP_003667248.1">
    <property type="nucleotide sequence ID" value="NC_009513.1"/>
</dbReference>
<dbReference type="SMR" id="A5VI51"/>
<dbReference type="STRING" id="557436.Lreu_0255"/>
<dbReference type="KEGG" id="lre:Lreu_0255"/>
<dbReference type="PATRIC" id="fig|557436.17.peg.899"/>
<dbReference type="eggNOG" id="COG0787">
    <property type="taxonomic scope" value="Bacteria"/>
</dbReference>
<dbReference type="HOGENOM" id="CLU_028393_2_1_9"/>
<dbReference type="UniPathway" id="UPA00042">
    <property type="reaction ID" value="UER00497"/>
</dbReference>
<dbReference type="Proteomes" id="UP000001991">
    <property type="component" value="Chromosome"/>
</dbReference>
<dbReference type="GO" id="GO:0005829">
    <property type="term" value="C:cytosol"/>
    <property type="evidence" value="ECO:0007669"/>
    <property type="project" value="TreeGrafter"/>
</dbReference>
<dbReference type="GO" id="GO:0008784">
    <property type="term" value="F:alanine racemase activity"/>
    <property type="evidence" value="ECO:0007669"/>
    <property type="project" value="UniProtKB-UniRule"/>
</dbReference>
<dbReference type="GO" id="GO:0030170">
    <property type="term" value="F:pyridoxal phosphate binding"/>
    <property type="evidence" value="ECO:0007669"/>
    <property type="project" value="UniProtKB-UniRule"/>
</dbReference>
<dbReference type="GO" id="GO:0030632">
    <property type="term" value="P:D-alanine biosynthetic process"/>
    <property type="evidence" value="ECO:0007669"/>
    <property type="project" value="UniProtKB-UniRule"/>
</dbReference>
<dbReference type="GO" id="GO:0009252">
    <property type="term" value="P:peptidoglycan biosynthetic process"/>
    <property type="evidence" value="ECO:0007669"/>
    <property type="project" value="TreeGrafter"/>
</dbReference>
<dbReference type="CDD" id="cd00430">
    <property type="entry name" value="PLPDE_III_AR"/>
    <property type="match status" value="1"/>
</dbReference>
<dbReference type="FunFam" id="2.40.37.10:FF:000006">
    <property type="entry name" value="Alanine racemase"/>
    <property type="match status" value="1"/>
</dbReference>
<dbReference type="FunFam" id="3.20.20.10:FF:000002">
    <property type="entry name" value="Alanine racemase"/>
    <property type="match status" value="1"/>
</dbReference>
<dbReference type="Gene3D" id="3.20.20.10">
    <property type="entry name" value="Alanine racemase"/>
    <property type="match status" value="1"/>
</dbReference>
<dbReference type="Gene3D" id="2.40.37.10">
    <property type="entry name" value="Lyase, Ornithine Decarboxylase, Chain A, domain 1"/>
    <property type="match status" value="1"/>
</dbReference>
<dbReference type="HAMAP" id="MF_01201">
    <property type="entry name" value="Ala_racemase"/>
    <property type="match status" value="1"/>
</dbReference>
<dbReference type="InterPro" id="IPR000821">
    <property type="entry name" value="Ala_racemase"/>
</dbReference>
<dbReference type="InterPro" id="IPR009006">
    <property type="entry name" value="Ala_racemase/Decarboxylase_C"/>
</dbReference>
<dbReference type="InterPro" id="IPR011079">
    <property type="entry name" value="Ala_racemase_C"/>
</dbReference>
<dbReference type="InterPro" id="IPR001608">
    <property type="entry name" value="Ala_racemase_N"/>
</dbReference>
<dbReference type="InterPro" id="IPR020622">
    <property type="entry name" value="Ala_racemase_pyridoxalP-BS"/>
</dbReference>
<dbReference type="InterPro" id="IPR029066">
    <property type="entry name" value="PLP-binding_barrel"/>
</dbReference>
<dbReference type="NCBIfam" id="TIGR00492">
    <property type="entry name" value="alr"/>
    <property type="match status" value="1"/>
</dbReference>
<dbReference type="PANTHER" id="PTHR30511">
    <property type="entry name" value="ALANINE RACEMASE"/>
    <property type="match status" value="1"/>
</dbReference>
<dbReference type="PANTHER" id="PTHR30511:SF0">
    <property type="entry name" value="ALANINE RACEMASE, CATABOLIC-RELATED"/>
    <property type="match status" value="1"/>
</dbReference>
<dbReference type="Pfam" id="PF00842">
    <property type="entry name" value="Ala_racemase_C"/>
    <property type="match status" value="1"/>
</dbReference>
<dbReference type="Pfam" id="PF01168">
    <property type="entry name" value="Ala_racemase_N"/>
    <property type="match status" value="1"/>
</dbReference>
<dbReference type="PRINTS" id="PR00992">
    <property type="entry name" value="ALARACEMASE"/>
</dbReference>
<dbReference type="SMART" id="SM01005">
    <property type="entry name" value="Ala_racemase_C"/>
    <property type="match status" value="1"/>
</dbReference>
<dbReference type="SUPFAM" id="SSF50621">
    <property type="entry name" value="Alanine racemase C-terminal domain-like"/>
    <property type="match status" value="1"/>
</dbReference>
<dbReference type="SUPFAM" id="SSF51419">
    <property type="entry name" value="PLP-binding barrel"/>
    <property type="match status" value="1"/>
</dbReference>
<dbReference type="PROSITE" id="PS00395">
    <property type="entry name" value="ALANINE_RACEMASE"/>
    <property type="match status" value="1"/>
</dbReference>
<keyword id="KW-0413">Isomerase</keyword>
<keyword id="KW-0663">Pyridoxal phosphate</keyword>
<keyword id="KW-1185">Reference proteome</keyword>
<gene>
    <name type="primary">alr</name>
    <name type="ordered locus">Lreu_0255</name>
</gene>
<evidence type="ECO:0000255" key="1">
    <source>
        <dbReference type="HAMAP-Rule" id="MF_01201"/>
    </source>
</evidence>
<reference key="1">
    <citation type="journal article" date="2011" name="PLoS Genet.">
        <title>The evolution of host specialization in the vertebrate gut symbiont Lactobacillus reuteri.</title>
        <authorList>
            <person name="Frese S.A."/>
            <person name="Benson A.K."/>
            <person name="Tannock G.W."/>
            <person name="Loach D.M."/>
            <person name="Kim J."/>
            <person name="Zhang M."/>
            <person name="Oh P.L."/>
            <person name="Heng N.C."/>
            <person name="Patil P.B."/>
            <person name="Juge N."/>
            <person name="Mackenzie D.A."/>
            <person name="Pearson B.M."/>
            <person name="Lapidus A."/>
            <person name="Dalin E."/>
            <person name="Tice H."/>
            <person name="Goltsman E."/>
            <person name="Land M."/>
            <person name="Hauser L."/>
            <person name="Ivanova N."/>
            <person name="Kyrpides N.C."/>
            <person name="Walter J."/>
        </authorList>
    </citation>
    <scope>NUCLEOTIDE SEQUENCE [LARGE SCALE GENOMIC DNA]</scope>
    <source>
        <strain>DSM 20016</strain>
    </source>
</reference>
<comment type="function">
    <text evidence="1">Catalyzes the interconversion of L-alanine and D-alanine. May also act on other amino acids.</text>
</comment>
<comment type="catalytic activity">
    <reaction evidence="1">
        <text>L-alanine = D-alanine</text>
        <dbReference type="Rhea" id="RHEA:20249"/>
        <dbReference type="ChEBI" id="CHEBI:57416"/>
        <dbReference type="ChEBI" id="CHEBI:57972"/>
        <dbReference type="EC" id="5.1.1.1"/>
    </reaction>
</comment>
<comment type="cofactor">
    <cofactor evidence="1">
        <name>pyridoxal 5'-phosphate</name>
        <dbReference type="ChEBI" id="CHEBI:597326"/>
    </cofactor>
</comment>
<comment type="pathway">
    <text evidence="1">Amino-acid biosynthesis; D-alanine biosynthesis; D-alanine from L-alanine: step 1/1.</text>
</comment>
<comment type="similarity">
    <text evidence="1">Belongs to the alanine racemase family.</text>
</comment>
<feature type="chain" id="PRO_1000066002" description="Alanine racemase">
    <location>
        <begin position="1"/>
        <end position="375"/>
    </location>
</feature>
<feature type="active site" description="Proton acceptor; specific for D-alanine" evidence="1">
    <location>
        <position position="40"/>
    </location>
</feature>
<feature type="active site" description="Proton acceptor; specific for L-alanine" evidence="1">
    <location>
        <position position="268"/>
    </location>
</feature>
<feature type="binding site" evidence="1">
    <location>
        <position position="140"/>
    </location>
    <ligand>
        <name>substrate</name>
    </ligand>
</feature>
<feature type="binding site" evidence="1">
    <location>
        <position position="315"/>
    </location>
    <ligand>
        <name>substrate</name>
    </ligand>
</feature>
<feature type="modified residue" description="N6-(pyridoxal phosphate)lysine" evidence="1">
    <location>
        <position position="40"/>
    </location>
</feature>
<name>ALR_LIMRD</name>
<proteinExistence type="inferred from homology"/>
<sequence length="375" mass="41162">MVNGRLRDTSLIVDLDALRHNIQEQKKVLPENSKILAVVKANAYGNGLIPVAQTAMTSGASGLCVAILDEALELRDNGIEAMTLVLGITSVEDALIAAQAGVSLTVGSLDWLEQYHQLAQVAKPKKPLKVHLGIDSGMGRIGFTEVAAFKQAVKLLDSPEFEFEGMFTHFATADSPDENYFNQQVQRWHQFVASLAELPPYVHMANSATGLWHRETITANTIRMGISMYGQNPSGRDLKLTLDLQPVSSLVSSISFVKQLKAGRSVSYGATYTAEQDEWLATLPIGYADGYPRCMTGYKVLVDGQFCDIAGRVCMDQMMIRLPKYYPVGTPVVLMGKSGDQEITATDLAERAGTINYEILTNISNRVHRIYRQSK</sequence>
<protein>
    <recommendedName>
        <fullName evidence="1">Alanine racemase</fullName>
        <ecNumber evidence="1">5.1.1.1</ecNumber>
    </recommendedName>
</protein>
<organism>
    <name type="scientific">Limosilactobacillus reuteri (strain DSM 20016)</name>
    <name type="common">Lactobacillus reuteri</name>
    <dbReference type="NCBI Taxonomy" id="557436"/>
    <lineage>
        <taxon>Bacteria</taxon>
        <taxon>Bacillati</taxon>
        <taxon>Bacillota</taxon>
        <taxon>Bacilli</taxon>
        <taxon>Lactobacillales</taxon>
        <taxon>Lactobacillaceae</taxon>
        <taxon>Limosilactobacillus</taxon>
    </lineage>
</organism>